<proteinExistence type="evidence at protein level"/>
<reference key="1">
    <citation type="journal article" date="1997" name="Nature">
        <title>The nucleotide sequence of Saccharomyces cerevisiae chromosome V.</title>
        <authorList>
            <person name="Dietrich F.S."/>
            <person name="Mulligan J.T."/>
            <person name="Hennessy K.M."/>
            <person name="Yelton M.A."/>
            <person name="Allen E."/>
            <person name="Araujo R."/>
            <person name="Aviles E."/>
            <person name="Berno A."/>
            <person name="Brennan T."/>
            <person name="Carpenter J."/>
            <person name="Chen E."/>
            <person name="Cherry J.M."/>
            <person name="Chung E."/>
            <person name="Duncan M."/>
            <person name="Guzman E."/>
            <person name="Hartzell G."/>
            <person name="Hunicke-Smith S."/>
            <person name="Hyman R.W."/>
            <person name="Kayser A."/>
            <person name="Komp C."/>
            <person name="Lashkari D."/>
            <person name="Lew H."/>
            <person name="Lin D."/>
            <person name="Mosedale D."/>
            <person name="Nakahara K."/>
            <person name="Namath A."/>
            <person name="Norgren R."/>
            <person name="Oefner P."/>
            <person name="Oh C."/>
            <person name="Petel F.X."/>
            <person name="Roberts D."/>
            <person name="Sehl P."/>
            <person name="Schramm S."/>
            <person name="Shogren T."/>
            <person name="Smith V."/>
            <person name="Taylor P."/>
            <person name="Wei Y."/>
            <person name="Botstein D."/>
            <person name="Davis R.W."/>
        </authorList>
    </citation>
    <scope>NUCLEOTIDE SEQUENCE [LARGE SCALE GENOMIC DNA]</scope>
    <source>
        <strain>ATCC 204508 / S288c</strain>
    </source>
</reference>
<reference key="2">
    <citation type="journal article" date="2014" name="G3 (Bethesda)">
        <title>The reference genome sequence of Saccharomyces cerevisiae: Then and now.</title>
        <authorList>
            <person name="Engel S.R."/>
            <person name="Dietrich F.S."/>
            <person name="Fisk D.G."/>
            <person name="Binkley G."/>
            <person name="Balakrishnan R."/>
            <person name="Costanzo M.C."/>
            <person name="Dwight S.S."/>
            <person name="Hitz B.C."/>
            <person name="Karra K."/>
            <person name="Nash R.S."/>
            <person name="Weng S."/>
            <person name="Wong E.D."/>
            <person name="Lloyd P."/>
            <person name="Skrzypek M.S."/>
            <person name="Miyasato S.R."/>
            <person name="Simison M."/>
            <person name="Cherry J.M."/>
        </authorList>
    </citation>
    <scope>GENOME REANNOTATION</scope>
    <source>
        <strain>ATCC 204508 / S288c</strain>
    </source>
</reference>
<reference key="3">
    <citation type="journal article" date="2007" name="Genome Res.">
        <title>Approaching a complete repository of sequence-verified protein-encoding clones for Saccharomyces cerevisiae.</title>
        <authorList>
            <person name="Hu Y."/>
            <person name="Rolfs A."/>
            <person name="Bhullar B."/>
            <person name="Murthy T.V.S."/>
            <person name="Zhu C."/>
            <person name="Berger M.F."/>
            <person name="Camargo A.A."/>
            <person name="Kelley F."/>
            <person name="McCarron S."/>
            <person name="Jepson D."/>
            <person name="Richardson A."/>
            <person name="Raphael J."/>
            <person name="Moreira D."/>
            <person name="Taycher E."/>
            <person name="Zuo D."/>
            <person name="Mohr S."/>
            <person name="Kane M.F."/>
            <person name="Williamson J."/>
            <person name="Simpson A.J.G."/>
            <person name="Bulyk M.L."/>
            <person name="Harlow E."/>
            <person name="Marsischky G."/>
            <person name="Kolodner R.D."/>
            <person name="LaBaer J."/>
        </authorList>
    </citation>
    <scope>NUCLEOTIDE SEQUENCE [GENOMIC DNA]</scope>
    <source>
        <strain>ATCC 204508 / S288c</strain>
    </source>
</reference>
<reference key="4">
    <citation type="journal article" date="2003" name="Nature">
        <title>Global analysis of protein expression in yeast.</title>
        <authorList>
            <person name="Ghaemmaghami S."/>
            <person name="Huh W.-K."/>
            <person name="Bower K."/>
            <person name="Howson R.W."/>
            <person name="Belle A."/>
            <person name="Dephoure N."/>
            <person name="O'Shea E.K."/>
            <person name="Weissman J.S."/>
        </authorList>
    </citation>
    <scope>LEVEL OF PROTEIN EXPRESSION [LARGE SCALE ANALYSIS]</scope>
</reference>
<accession>P39977</accession>
<accession>I2HB56</accession>
<name>YEH8_YEAST</name>
<protein>
    <recommendedName>
        <fullName>Uncharacterized protein YEL068C</fullName>
    </recommendedName>
</protein>
<dbReference type="EMBL" id="U18795">
    <property type="protein sequence ID" value="AAB65019.1"/>
    <property type="molecule type" value="Genomic_DNA"/>
</dbReference>
<dbReference type="EMBL" id="AY693268">
    <property type="protein sequence ID" value="AAT93287.1"/>
    <property type="molecule type" value="Genomic_DNA"/>
</dbReference>
<dbReference type="EMBL" id="BK006939">
    <property type="protein sequence ID" value="DAA35102.1"/>
    <property type="molecule type" value="Genomic_DNA"/>
</dbReference>
<dbReference type="PIR" id="S50521">
    <property type="entry name" value="S50521"/>
</dbReference>
<dbReference type="RefSeq" id="NP_001257672.1">
    <property type="nucleotide sequence ID" value="NM_001270743.1"/>
</dbReference>
<dbReference type="BioGRID" id="300939">
    <property type="interactions" value="4"/>
</dbReference>
<dbReference type="DIP" id="DIP-1794N"/>
<dbReference type="FunCoup" id="P39977">
    <property type="interactions" value="22"/>
</dbReference>
<dbReference type="IntAct" id="P39977">
    <property type="interactions" value="2"/>
</dbReference>
<dbReference type="MINT" id="P39977"/>
<dbReference type="STRING" id="4932.YEL068C"/>
<dbReference type="PaxDb" id="4932-YEL068C"/>
<dbReference type="PeptideAtlas" id="P39977"/>
<dbReference type="EnsemblFungi" id="YEL068C_mRNA">
    <property type="protein sequence ID" value="YEL068C"/>
    <property type="gene ID" value="YEL068C"/>
</dbReference>
<dbReference type="GeneID" id="856641"/>
<dbReference type="KEGG" id="sce:YEL068C"/>
<dbReference type="AGR" id="SGD:S000000794"/>
<dbReference type="SGD" id="S000000794">
    <property type="gene designation" value="YEL068C"/>
</dbReference>
<dbReference type="VEuPathDB" id="FungiDB:YEL068C"/>
<dbReference type="HOGENOM" id="CLU_2173015_0_0_1"/>
<dbReference type="InParanoid" id="P39977"/>
<dbReference type="OrthoDB" id="4036904at2759"/>
<dbReference type="BioCyc" id="YEAST:G3O-30183-MONOMER"/>
<dbReference type="BioGRID-ORCS" id="856641">
    <property type="hits" value="0 hits in 10 CRISPR screens"/>
</dbReference>
<dbReference type="PRO" id="PR:P39977"/>
<dbReference type="Proteomes" id="UP000002311">
    <property type="component" value="Chromosome V"/>
</dbReference>
<dbReference type="RNAct" id="P39977">
    <property type="molecule type" value="protein"/>
</dbReference>
<dbReference type="GO" id="GO:0005783">
    <property type="term" value="C:endoplasmic reticulum"/>
    <property type="evidence" value="ECO:0007005"/>
    <property type="project" value="SGD"/>
</dbReference>
<sequence>MKILALAVAFQGLALVCCTDTTDNYNNFTHNTSTFYRIADYDKRFWSVKLPPVNWTTCGNEDHPWITIHYDEIDKLVDDKLASWDKGPVPDREEFRNSILRQARCDRPHY</sequence>
<feature type="chain" id="PRO_0000202601" description="Uncharacterized protein YEL068C">
    <location>
        <begin position="1"/>
        <end position="110"/>
    </location>
</feature>
<evidence type="ECO:0000269" key="1">
    <source>
    </source>
</evidence>
<comment type="miscellaneous">
    <text evidence="1">Present with 952 molecules/cell in log phase SD medium.</text>
</comment>
<organism>
    <name type="scientific">Saccharomyces cerevisiae (strain ATCC 204508 / S288c)</name>
    <name type="common">Baker's yeast</name>
    <dbReference type="NCBI Taxonomy" id="559292"/>
    <lineage>
        <taxon>Eukaryota</taxon>
        <taxon>Fungi</taxon>
        <taxon>Dikarya</taxon>
        <taxon>Ascomycota</taxon>
        <taxon>Saccharomycotina</taxon>
        <taxon>Saccharomycetes</taxon>
        <taxon>Saccharomycetales</taxon>
        <taxon>Saccharomycetaceae</taxon>
        <taxon>Saccharomyces</taxon>
    </lineage>
</organism>
<keyword id="KW-1185">Reference proteome</keyword>
<gene>
    <name type="ordered locus">YEL068C</name>
</gene>